<keyword id="KW-0963">Cytoplasm</keyword>
<keyword id="KW-0251">Elongation factor</keyword>
<keyword id="KW-0648">Protein biosynthesis</keyword>
<keyword id="KW-1185">Reference proteome</keyword>
<protein>
    <recommendedName>
        <fullName evidence="1">Elongation factor P</fullName>
        <shortName evidence="1">EF-P</shortName>
    </recommendedName>
</protein>
<feature type="chain" id="PRO_1000123013" description="Elongation factor P">
    <location>
        <begin position="1"/>
        <end position="186"/>
    </location>
</feature>
<evidence type="ECO:0000255" key="1">
    <source>
        <dbReference type="HAMAP-Rule" id="MF_00141"/>
    </source>
</evidence>
<gene>
    <name evidence="1" type="primary">efp</name>
    <name type="ordered locus">LHK_00710</name>
</gene>
<sequence>MKIAQELRSGNVFMLDGQPMVVQKTEYNKSGRNAAVVKMKMKNLLTGSASEAVYKADEKFDIVVLDKKECTYSYFADPMYVFMDGEFNQYEVEAENMEDVLPFLEDGMTDPCEVVFYEGRAISVELPTTVVREVEYTEPAVRGDTSGKVLKPARLHNGTVIQVAAFVEIGDKIEIDTRTSEFKKRA</sequence>
<dbReference type="EMBL" id="CP001154">
    <property type="protein sequence ID" value="ACO73703.1"/>
    <property type="molecule type" value="Genomic_DNA"/>
</dbReference>
<dbReference type="RefSeq" id="WP_012696195.1">
    <property type="nucleotide sequence ID" value="NC_012559.1"/>
</dbReference>
<dbReference type="SMR" id="C1DD68"/>
<dbReference type="STRING" id="557598.LHK_00710"/>
<dbReference type="GeneID" id="75109034"/>
<dbReference type="KEGG" id="lhk:LHK_00710"/>
<dbReference type="eggNOG" id="COG0231">
    <property type="taxonomic scope" value="Bacteria"/>
</dbReference>
<dbReference type="HOGENOM" id="CLU_074944_2_1_4"/>
<dbReference type="UniPathway" id="UPA00345"/>
<dbReference type="Proteomes" id="UP000002010">
    <property type="component" value="Chromosome"/>
</dbReference>
<dbReference type="GO" id="GO:0005737">
    <property type="term" value="C:cytoplasm"/>
    <property type="evidence" value="ECO:0007669"/>
    <property type="project" value="UniProtKB-SubCell"/>
</dbReference>
<dbReference type="GO" id="GO:0003746">
    <property type="term" value="F:translation elongation factor activity"/>
    <property type="evidence" value="ECO:0007669"/>
    <property type="project" value="UniProtKB-UniRule"/>
</dbReference>
<dbReference type="GO" id="GO:0043043">
    <property type="term" value="P:peptide biosynthetic process"/>
    <property type="evidence" value="ECO:0007669"/>
    <property type="project" value="InterPro"/>
</dbReference>
<dbReference type="CDD" id="cd04470">
    <property type="entry name" value="S1_EF-P_repeat_1"/>
    <property type="match status" value="1"/>
</dbReference>
<dbReference type="CDD" id="cd05794">
    <property type="entry name" value="S1_EF-P_repeat_2"/>
    <property type="match status" value="1"/>
</dbReference>
<dbReference type="FunFam" id="2.30.30.30:FF:000003">
    <property type="entry name" value="Elongation factor P"/>
    <property type="match status" value="1"/>
</dbReference>
<dbReference type="FunFam" id="2.40.50.140:FF:000004">
    <property type="entry name" value="Elongation factor P"/>
    <property type="match status" value="1"/>
</dbReference>
<dbReference type="FunFam" id="2.40.50.140:FF:000009">
    <property type="entry name" value="Elongation factor P"/>
    <property type="match status" value="1"/>
</dbReference>
<dbReference type="Gene3D" id="2.30.30.30">
    <property type="match status" value="1"/>
</dbReference>
<dbReference type="Gene3D" id="2.40.50.140">
    <property type="entry name" value="Nucleic acid-binding proteins"/>
    <property type="match status" value="2"/>
</dbReference>
<dbReference type="HAMAP" id="MF_00141">
    <property type="entry name" value="EF_P"/>
    <property type="match status" value="1"/>
</dbReference>
<dbReference type="InterPro" id="IPR015365">
    <property type="entry name" value="Elong-fact-P_C"/>
</dbReference>
<dbReference type="InterPro" id="IPR012340">
    <property type="entry name" value="NA-bd_OB-fold"/>
</dbReference>
<dbReference type="InterPro" id="IPR014722">
    <property type="entry name" value="Rib_uL2_dom2"/>
</dbReference>
<dbReference type="InterPro" id="IPR020599">
    <property type="entry name" value="Transl_elong_fac_P/YeiP"/>
</dbReference>
<dbReference type="InterPro" id="IPR013185">
    <property type="entry name" value="Transl_elong_KOW-like"/>
</dbReference>
<dbReference type="InterPro" id="IPR001059">
    <property type="entry name" value="Transl_elong_P/YeiP_cen"/>
</dbReference>
<dbReference type="InterPro" id="IPR011768">
    <property type="entry name" value="Transl_elongation_fac_P"/>
</dbReference>
<dbReference type="InterPro" id="IPR008991">
    <property type="entry name" value="Translation_prot_SH3-like_sf"/>
</dbReference>
<dbReference type="NCBIfam" id="TIGR00038">
    <property type="entry name" value="efp"/>
    <property type="match status" value="1"/>
</dbReference>
<dbReference type="NCBIfam" id="NF001810">
    <property type="entry name" value="PRK00529.1"/>
    <property type="match status" value="1"/>
</dbReference>
<dbReference type="PANTHER" id="PTHR30053">
    <property type="entry name" value="ELONGATION FACTOR P"/>
    <property type="match status" value="1"/>
</dbReference>
<dbReference type="PANTHER" id="PTHR30053:SF12">
    <property type="entry name" value="ELONGATION FACTOR P (EF-P) FAMILY PROTEIN"/>
    <property type="match status" value="1"/>
</dbReference>
<dbReference type="Pfam" id="PF01132">
    <property type="entry name" value="EFP"/>
    <property type="match status" value="1"/>
</dbReference>
<dbReference type="Pfam" id="PF08207">
    <property type="entry name" value="EFP_N"/>
    <property type="match status" value="1"/>
</dbReference>
<dbReference type="Pfam" id="PF09285">
    <property type="entry name" value="Elong-fact-P_C"/>
    <property type="match status" value="1"/>
</dbReference>
<dbReference type="PIRSF" id="PIRSF005901">
    <property type="entry name" value="EF-P"/>
    <property type="match status" value="1"/>
</dbReference>
<dbReference type="SMART" id="SM01185">
    <property type="entry name" value="EFP"/>
    <property type="match status" value="1"/>
</dbReference>
<dbReference type="SMART" id="SM00841">
    <property type="entry name" value="Elong-fact-P_C"/>
    <property type="match status" value="1"/>
</dbReference>
<dbReference type="SUPFAM" id="SSF50249">
    <property type="entry name" value="Nucleic acid-binding proteins"/>
    <property type="match status" value="2"/>
</dbReference>
<dbReference type="SUPFAM" id="SSF50104">
    <property type="entry name" value="Translation proteins SH3-like domain"/>
    <property type="match status" value="1"/>
</dbReference>
<comment type="function">
    <text evidence="1">Involved in peptide bond synthesis. Stimulates efficient translation and peptide-bond synthesis on native or reconstituted 70S ribosomes in vitro. Probably functions indirectly by altering the affinity of the ribosome for aminoacyl-tRNA, thus increasing their reactivity as acceptors for peptidyl transferase.</text>
</comment>
<comment type="pathway">
    <text evidence="1">Protein biosynthesis; polypeptide chain elongation.</text>
</comment>
<comment type="subcellular location">
    <subcellularLocation>
        <location evidence="1">Cytoplasm</location>
    </subcellularLocation>
</comment>
<comment type="similarity">
    <text evidence="1">Belongs to the elongation factor P family.</text>
</comment>
<proteinExistence type="inferred from homology"/>
<name>EFP_LARHH</name>
<reference key="1">
    <citation type="journal article" date="2009" name="PLoS Genet.">
        <title>The complete genome and proteome of Laribacter hongkongensis reveal potential mechanisms for adaptations to different temperatures and habitats.</title>
        <authorList>
            <person name="Woo P.C.Y."/>
            <person name="Lau S.K.P."/>
            <person name="Tse H."/>
            <person name="Teng J.L.L."/>
            <person name="Curreem S.O."/>
            <person name="Tsang A.K.L."/>
            <person name="Fan R.Y.Y."/>
            <person name="Wong G.K.M."/>
            <person name="Huang Y."/>
            <person name="Loman N.J."/>
            <person name="Snyder L.A.S."/>
            <person name="Cai J.J."/>
            <person name="Huang J.-D."/>
            <person name="Mak W."/>
            <person name="Pallen M.J."/>
            <person name="Lok S."/>
            <person name="Yuen K.-Y."/>
        </authorList>
    </citation>
    <scope>NUCLEOTIDE SEQUENCE [LARGE SCALE GENOMIC DNA]</scope>
    <source>
        <strain>HLHK9</strain>
    </source>
</reference>
<organism>
    <name type="scientific">Laribacter hongkongensis (strain HLHK9)</name>
    <dbReference type="NCBI Taxonomy" id="557598"/>
    <lineage>
        <taxon>Bacteria</taxon>
        <taxon>Pseudomonadati</taxon>
        <taxon>Pseudomonadota</taxon>
        <taxon>Betaproteobacteria</taxon>
        <taxon>Neisseriales</taxon>
        <taxon>Aquaspirillaceae</taxon>
        <taxon>Laribacter</taxon>
    </lineage>
</organism>
<accession>C1DD68</accession>